<accession>P47839</accession>
<name>RS7_SALSA</name>
<organism>
    <name type="scientific">Salmo salar</name>
    <name type="common">Atlantic salmon</name>
    <dbReference type="NCBI Taxonomy" id="8030"/>
    <lineage>
        <taxon>Eukaryota</taxon>
        <taxon>Metazoa</taxon>
        <taxon>Chordata</taxon>
        <taxon>Craniata</taxon>
        <taxon>Vertebrata</taxon>
        <taxon>Euteleostomi</taxon>
        <taxon>Actinopterygii</taxon>
        <taxon>Neopterygii</taxon>
        <taxon>Teleostei</taxon>
        <taxon>Protacanthopterygii</taxon>
        <taxon>Salmoniformes</taxon>
        <taxon>Salmonidae</taxon>
        <taxon>Salmoninae</taxon>
        <taxon>Salmo</taxon>
    </lineage>
</organism>
<protein>
    <recommendedName>
        <fullName evidence="3">Small ribosomal subunit protein eS7</fullName>
    </recommendedName>
    <alternativeName>
        <fullName>40S ribosomal protein S7</fullName>
    </alternativeName>
</protein>
<gene>
    <name type="primary">rps7</name>
</gene>
<comment type="function">
    <text evidence="1">Component of the small ribosomal subunit. The ribosome is a large ribonucleoprotein complex responsible for the synthesis of proteins in the cell. Required for rRNA maturation.</text>
</comment>
<comment type="subunit">
    <text evidence="1">Component of the small ribosomal subunit.</text>
</comment>
<comment type="subcellular location">
    <subcellularLocation>
        <location evidence="1">Cytoplasm</location>
        <location evidence="1">Cytoskeleton</location>
        <location evidence="1">Microtubule organizing center</location>
        <location evidence="1">Centrosome</location>
    </subcellularLocation>
    <subcellularLocation>
        <location evidence="1">Cytoplasm</location>
    </subcellularLocation>
    <subcellularLocation>
        <location evidence="1">Nucleus</location>
    </subcellularLocation>
</comment>
<comment type="similarity">
    <text evidence="3">Belongs to the eukaryotic ribosomal protein eS7 family.</text>
</comment>
<keyword id="KW-0963">Cytoplasm</keyword>
<keyword id="KW-0206">Cytoskeleton</keyword>
<keyword id="KW-0539">Nucleus</keyword>
<keyword id="KW-1185">Reference proteome</keyword>
<keyword id="KW-0687">Ribonucleoprotein</keyword>
<keyword id="KW-0689">Ribosomal protein</keyword>
<reference key="1">
    <citation type="submission" date="1994-12" db="EMBL/GenBank/DDBJ databases">
        <authorList>
            <person name="McGowan C."/>
            <person name="Davidson W.S."/>
        </authorList>
    </citation>
    <scope>NUCLEOTIDE SEQUENCE [MRNA]</scope>
    <source>
        <tissue>Muscle</tissue>
    </source>
</reference>
<dbReference type="EMBL" id="U18487">
    <property type="protein sequence ID" value="AAA57516.1"/>
    <property type="molecule type" value="mRNA"/>
</dbReference>
<dbReference type="SMR" id="P47839"/>
<dbReference type="STRING" id="8030.ENSSSAP00000035257"/>
<dbReference type="PaxDb" id="8030-ENSSSAP00000035257"/>
<dbReference type="Proteomes" id="UP000087266">
    <property type="component" value="Unplaced"/>
</dbReference>
<dbReference type="GO" id="GO:0005813">
    <property type="term" value="C:centrosome"/>
    <property type="evidence" value="ECO:0007669"/>
    <property type="project" value="UniProtKB-SubCell"/>
</dbReference>
<dbReference type="GO" id="GO:0005737">
    <property type="term" value="C:cytoplasm"/>
    <property type="evidence" value="ECO:0007669"/>
    <property type="project" value="UniProtKB-SubCell"/>
</dbReference>
<dbReference type="GO" id="GO:0005634">
    <property type="term" value="C:nucleus"/>
    <property type="evidence" value="ECO:0007669"/>
    <property type="project" value="UniProtKB-SubCell"/>
</dbReference>
<dbReference type="GO" id="GO:1990904">
    <property type="term" value="C:ribonucleoprotein complex"/>
    <property type="evidence" value="ECO:0007669"/>
    <property type="project" value="UniProtKB-KW"/>
</dbReference>
<dbReference type="GO" id="GO:0005840">
    <property type="term" value="C:ribosome"/>
    <property type="evidence" value="ECO:0007669"/>
    <property type="project" value="UniProtKB-KW"/>
</dbReference>
<dbReference type="GO" id="GO:0003735">
    <property type="term" value="F:structural constituent of ribosome"/>
    <property type="evidence" value="ECO:0007669"/>
    <property type="project" value="InterPro"/>
</dbReference>
<dbReference type="GO" id="GO:0006412">
    <property type="term" value="P:translation"/>
    <property type="evidence" value="ECO:0007669"/>
    <property type="project" value="InterPro"/>
</dbReference>
<dbReference type="InterPro" id="IPR000554">
    <property type="entry name" value="Ribosomal_eS7"/>
</dbReference>
<dbReference type="Pfam" id="PF01251">
    <property type="entry name" value="Ribosomal_S7e"/>
    <property type="match status" value="1"/>
</dbReference>
<proteinExistence type="evidence at transcript level"/>
<evidence type="ECO:0000250" key="1">
    <source>
        <dbReference type="UniProtKB" id="P62081"/>
    </source>
</evidence>
<evidence type="ECO:0000256" key="2">
    <source>
        <dbReference type="SAM" id="MobiDB-lite"/>
    </source>
</evidence>
<evidence type="ECO:0000305" key="3"/>
<sequence length="44" mass="5226">NWSSLIFSLNLQRRILPKPTRKSRIKNKQKRPRSRTLTAVHDAI</sequence>
<feature type="chain" id="PRO_0000174196" description="Small ribosomal subunit protein eS7">
    <location>
        <begin position="1" status="less than"/>
        <end position="44" status="greater than"/>
    </location>
</feature>
<feature type="region of interest" description="Disordered" evidence="2">
    <location>
        <begin position="18"/>
        <end position="44"/>
    </location>
</feature>
<feature type="compositionally biased region" description="Basic residues" evidence="2">
    <location>
        <begin position="18"/>
        <end position="34"/>
    </location>
</feature>
<feature type="non-terminal residue">
    <location>
        <position position="1"/>
    </location>
</feature>
<feature type="non-terminal residue">
    <location>
        <position position="44"/>
    </location>
</feature>